<sequence length="15" mass="1646">XTQQEGMDISSSLXK</sequence>
<keyword id="KW-0903">Direct protein sequencing</keyword>
<protein>
    <recommendedName>
        <fullName>48 kDa protein</fullName>
    </recommendedName>
</protein>
<name>48KD_BACCE</name>
<proteinExistence type="evidence at protein level"/>
<feature type="chain" id="PRO_0000064380" description="48 kDa protein">
    <location>
        <begin position="1"/>
        <end position="15" status="greater than"/>
    </location>
</feature>
<feature type="non-terminal residue">
    <location>
        <position position="15"/>
    </location>
</feature>
<reference key="1">
    <citation type="journal article" date="1993" name="FEMS Microbiol. Lett.">
        <title>Sphingomyelinase is part of the 'enterotoxin complex' produced by Bacillus cereus.</title>
        <authorList>
            <person name="Granum P.E."/>
            <person name="Nissen H."/>
        </authorList>
    </citation>
    <scope>PROTEIN SEQUENCE</scope>
    <source>
        <strain>1230-88</strain>
    </source>
</reference>
<comment type="function">
    <text>Not known, part of the enterotoxin complex.</text>
</comment>
<accession>P80173</accession>
<organism>
    <name type="scientific">Bacillus cereus</name>
    <dbReference type="NCBI Taxonomy" id="1396"/>
    <lineage>
        <taxon>Bacteria</taxon>
        <taxon>Bacillati</taxon>
        <taxon>Bacillota</taxon>
        <taxon>Bacilli</taxon>
        <taxon>Bacillales</taxon>
        <taxon>Bacillaceae</taxon>
        <taxon>Bacillus</taxon>
        <taxon>Bacillus cereus group</taxon>
    </lineage>
</organism>